<sequence length="489" mass="54066">MTFRNCVAVDLGASSGRVMLARYERECRSLTLREIHRFNNGLHSQNGYVTWNVDSLESAIRLGLNKVCEEGIRIDSIGIDTWGVDFVLLDQQGQRVGLPVAYRDSRSNGLMAQAQQQLGKRDIYQRSGIQFLPFNTLYQLRALTEQQPELIPHIAHALLMPDYFSYRLTGKMNWEYTNATTTQLVNINSDDWDESLLAWSGANKAWFGRPTHPGNVIGHWICPQGNEIPVVAVASHDTASAVIASPLNGSRAAYLSSGTWSLMGFESQTPFTNDTALAANITNEGGAEGRYRVLKNIMGLWLLQRVLQERQINDLPALIAATQALPACRFIINPNDDRFINPEAMCSEIQAACREMAQPLPESDAELARCIFDSLALLYADVLHELAQLRGEDFSQLHIVGGGCQNTLLNQLCADACGIRVIAGPVEASTLGNIGIQLMTLDELNNVDDFRQVVSTTANLTTFTPNPDSEIAHYVAQLHSTRQTKELCA</sequence>
<organism>
    <name type="scientific">Shigella sonnei (strain Ss046)</name>
    <dbReference type="NCBI Taxonomy" id="300269"/>
    <lineage>
        <taxon>Bacteria</taxon>
        <taxon>Pseudomonadati</taxon>
        <taxon>Pseudomonadota</taxon>
        <taxon>Gammaproteobacteria</taxon>
        <taxon>Enterobacterales</taxon>
        <taxon>Enterobacteriaceae</taxon>
        <taxon>Shigella</taxon>
    </lineage>
</organism>
<feature type="chain" id="PRO_0000297524" description="Rhamnulokinase">
    <location>
        <begin position="1"/>
        <end position="489"/>
    </location>
</feature>
<feature type="active site" description="Proton acceptor" evidence="1">
    <location>
        <position position="237"/>
    </location>
</feature>
<feature type="binding site" evidence="1">
    <location>
        <begin position="13"/>
        <end position="17"/>
    </location>
    <ligand>
        <name>ATP</name>
        <dbReference type="ChEBI" id="CHEBI:30616"/>
    </ligand>
</feature>
<feature type="binding site" evidence="1">
    <location>
        <position position="83"/>
    </location>
    <ligand>
        <name>substrate</name>
    </ligand>
</feature>
<feature type="binding site" evidence="1">
    <location>
        <begin position="236"/>
        <end position="238"/>
    </location>
    <ligand>
        <name>substrate</name>
    </ligand>
</feature>
<feature type="binding site" evidence="1">
    <location>
        <position position="259"/>
    </location>
    <ligand>
        <name>ATP</name>
        <dbReference type="ChEBI" id="CHEBI:30616"/>
    </ligand>
</feature>
<feature type="binding site" evidence="1">
    <location>
        <position position="296"/>
    </location>
    <ligand>
        <name>substrate</name>
    </ligand>
</feature>
<feature type="binding site" evidence="1">
    <location>
        <position position="304"/>
    </location>
    <ligand>
        <name>ATP</name>
        <dbReference type="ChEBI" id="CHEBI:30616"/>
    </ligand>
</feature>
<feature type="binding site" evidence="1">
    <location>
        <position position="402"/>
    </location>
    <ligand>
        <name>ATP</name>
        <dbReference type="ChEBI" id="CHEBI:30616"/>
    </ligand>
</feature>
<feature type="disulfide bond" evidence="1">
    <location>
        <begin position="68"/>
        <end position="222"/>
    </location>
</feature>
<feature type="disulfide bond" evidence="1">
    <location>
        <begin position="353"/>
        <end position="370"/>
    </location>
</feature>
<feature type="disulfide bond" evidence="1">
    <location>
        <begin position="413"/>
        <end position="417"/>
    </location>
</feature>
<keyword id="KW-0067">ATP-binding</keyword>
<keyword id="KW-1015">Disulfide bond</keyword>
<keyword id="KW-0418">Kinase</keyword>
<keyword id="KW-0460">Magnesium</keyword>
<keyword id="KW-0547">Nucleotide-binding</keyword>
<keyword id="KW-1185">Reference proteome</keyword>
<keyword id="KW-0684">Rhamnose metabolism</keyword>
<keyword id="KW-0808">Transferase</keyword>
<accession>Q3YV72</accession>
<name>RHAB_SHISS</name>
<proteinExistence type="inferred from homology"/>
<evidence type="ECO:0000255" key="1">
    <source>
        <dbReference type="HAMAP-Rule" id="MF_01535"/>
    </source>
</evidence>
<dbReference type="EC" id="2.7.1.5" evidence="1"/>
<dbReference type="EMBL" id="CP000038">
    <property type="protein sequence ID" value="AAZ90590.1"/>
    <property type="molecule type" value="Genomic_DNA"/>
</dbReference>
<dbReference type="RefSeq" id="WP_000144102.1">
    <property type="nucleotide sequence ID" value="NC_007384.1"/>
</dbReference>
<dbReference type="SMR" id="Q3YV72"/>
<dbReference type="GeneID" id="93778034"/>
<dbReference type="KEGG" id="ssn:SSON_4074"/>
<dbReference type="HOGENOM" id="CLU_039395_0_0_6"/>
<dbReference type="UniPathway" id="UPA00541">
    <property type="reaction ID" value="UER00602"/>
</dbReference>
<dbReference type="Proteomes" id="UP000002529">
    <property type="component" value="Chromosome"/>
</dbReference>
<dbReference type="GO" id="GO:0005829">
    <property type="term" value="C:cytosol"/>
    <property type="evidence" value="ECO:0007669"/>
    <property type="project" value="TreeGrafter"/>
</dbReference>
<dbReference type="GO" id="GO:0005524">
    <property type="term" value="F:ATP binding"/>
    <property type="evidence" value="ECO:0007669"/>
    <property type="project" value="UniProtKB-KW"/>
</dbReference>
<dbReference type="GO" id="GO:0004370">
    <property type="term" value="F:glycerol kinase activity"/>
    <property type="evidence" value="ECO:0007669"/>
    <property type="project" value="TreeGrafter"/>
</dbReference>
<dbReference type="GO" id="GO:0008993">
    <property type="term" value="F:rhamnulokinase activity"/>
    <property type="evidence" value="ECO:0007669"/>
    <property type="project" value="UniProtKB-UniRule"/>
</dbReference>
<dbReference type="GO" id="GO:0006071">
    <property type="term" value="P:glycerol metabolic process"/>
    <property type="evidence" value="ECO:0007669"/>
    <property type="project" value="TreeGrafter"/>
</dbReference>
<dbReference type="GO" id="GO:0019301">
    <property type="term" value="P:rhamnose catabolic process"/>
    <property type="evidence" value="ECO:0007669"/>
    <property type="project" value="UniProtKB-UniRule"/>
</dbReference>
<dbReference type="CDD" id="cd07771">
    <property type="entry name" value="ASKHA_NBD_FGGY_RhaB-like"/>
    <property type="match status" value="1"/>
</dbReference>
<dbReference type="FunFam" id="3.30.420.40:FF:000064">
    <property type="entry name" value="Rhamnulokinase"/>
    <property type="match status" value="1"/>
</dbReference>
<dbReference type="FunFam" id="3.30.420.40:FF:000073">
    <property type="entry name" value="Rhamnulokinase"/>
    <property type="match status" value="1"/>
</dbReference>
<dbReference type="Gene3D" id="3.30.420.40">
    <property type="match status" value="2"/>
</dbReference>
<dbReference type="HAMAP" id="MF_01535">
    <property type="entry name" value="Rhamnulokinase"/>
    <property type="match status" value="1"/>
</dbReference>
<dbReference type="InterPro" id="IPR043129">
    <property type="entry name" value="ATPase_NBD"/>
</dbReference>
<dbReference type="InterPro" id="IPR018485">
    <property type="entry name" value="FGGY_C"/>
</dbReference>
<dbReference type="InterPro" id="IPR018484">
    <property type="entry name" value="FGGY_N"/>
</dbReference>
<dbReference type="InterPro" id="IPR013449">
    <property type="entry name" value="Rhamnulokinase"/>
</dbReference>
<dbReference type="NCBIfam" id="NF007925">
    <property type="entry name" value="PRK10640.1"/>
    <property type="match status" value="1"/>
</dbReference>
<dbReference type="NCBIfam" id="TIGR02627">
    <property type="entry name" value="rhamnulo_kin"/>
    <property type="match status" value="1"/>
</dbReference>
<dbReference type="PANTHER" id="PTHR10196:SF93">
    <property type="entry name" value="L-RHAMNULOKINASE"/>
    <property type="match status" value="1"/>
</dbReference>
<dbReference type="PANTHER" id="PTHR10196">
    <property type="entry name" value="SUGAR KINASE"/>
    <property type="match status" value="1"/>
</dbReference>
<dbReference type="Pfam" id="PF02782">
    <property type="entry name" value="FGGY_C"/>
    <property type="match status" value="1"/>
</dbReference>
<dbReference type="Pfam" id="PF00370">
    <property type="entry name" value="FGGY_N"/>
    <property type="match status" value="1"/>
</dbReference>
<dbReference type="SUPFAM" id="SSF53067">
    <property type="entry name" value="Actin-like ATPase domain"/>
    <property type="match status" value="2"/>
</dbReference>
<protein>
    <recommendedName>
        <fullName evidence="1">Rhamnulokinase</fullName>
        <shortName evidence="1">RhaB</shortName>
        <ecNumber evidence="1">2.7.1.5</ecNumber>
    </recommendedName>
    <alternativeName>
        <fullName evidence="1">ATP:L-rhamnulose phosphotransferase</fullName>
    </alternativeName>
    <alternativeName>
        <fullName evidence="1">L-rhamnulose 1-kinase</fullName>
    </alternativeName>
    <alternativeName>
        <fullName evidence="1">Rhamnulose kinase</fullName>
    </alternativeName>
</protein>
<gene>
    <name evidence="1" type="primary">rhaB</name>
    <name type="ordered locus">SSON_4074</name>
</gene>
<reference key="1">
    <citation type="journal article" date="2005" name="Nucleic Acids Res.">
        <title>Genome dynamics and diversity of Shigella species, the etiologic agents of bacillary dysentery.</title>
        <authorList>
            <person name="Yang F."/>
            <person name="Yang J."/>
            <person name="Zhang X."/>
            <person name="Chen L."/>
            <person name="Jiang Y."/>
            <person name="Yan Y."/>
            <person name="Tang X."/>
            <person name="Wang J."/>
            <person name="Xiong Z."/>
            <person name="Dong J."/>
            <person name="Xue Y."/>
            <person name="Zhu Y."/>
            <person name="Xu X."/>
            <person name="Sun L."/>
            <person name="Chen S."/>
            <person name="Nie H."/>
            <person name="Peng J."/>
            <person name="Xu J."/>
            <person name="Wang Y."/>
            <person name="Yuan Z."/>
            <person name="Wen Y."/>
            <person name="Yao Z."/>
            <person name="Shen Y."/>
            <person name="Qiang B."/>
            <person name="Hou Y."/>
            <person name="Yu J."/>
            <person name="Jin Q."/>
        </authorList>
    </citation>
    <scope>NUCLEOTIDE SEQUENCE [LARGE SCALE GENOMIC DNA]</scope>
    <source>
        <strain>Ss046</strain>
    </source>
</reference>
<comment type="function">
    <text evidence="1">Involved in the catabolism of L-rhamnose (6-deoxy-L-mannose). Catalyzes the transfer of the gamma-phosphate group from ATP to the 1-hydroxyl group of L-rhamnulose to yield L-rhamnulose 1-phosphate.</text>
</comment>
<comment type="catalytic activity">
    <reaction evidence="1">
        <text>L-rhamnulose + ATP = L-rhamnulose 1-phosphate + ADP + H(+)</text>
        <dbReference type="Rhea" id="RHEA:20117"/>
        <dbReference type="ChEBI" id="CHEBI:15378"/>
        <dbReference type="ChEBI" id="CHEBI:17897"/>
        <dbReference type="ChEBI" id="CHEBI:30616"/>
        <dbReference type="ChEBI" id="CHEBI:58313"/>
        <dbReference type="ChEBI" id="CHEBI:456216"/>
        <dbReference type="EC" id="2.7.1.5"/>
    </reaction>
</comment>
<comment type="cofactor">
    <cofactor evidence="1">
        <name>Mg(2+)</name>
        <dbReference type="ChEBI" id="CHEBI:18420"/>
    </cofactor>
</comment>
<comment type="pathway">
    <text evidence="1">Carbohydrate degradation; L-rhamnose degradation; glycerone phosphate from L-rhamnose: step 2/3.</text>
</comment>
<comment type="similarity">
    <text evidence="1">Belongs to the rhamnulokinase family.</text>
</comment>